<name>RS3_RICRO</name>
<sequence>MGQKVCAHGFRVGPTLIKGWDSILYAEKHYKTLFIQDLKIRDLINKGFNQAQISRVLIERPSNKSIIININAKKPNIIIGRNGSEIDKLKKAIEKMTSLKEVYINIHEVRKFNIDAAIVAQTIALQLEKRVSFRKAMKTAIQASFKQGGQGIRVSCSGRLGGAEIARTEWYIEGRMPLHTLRADIDYSTAEAITTYGVIGVKVWIYKGEYTENKRYN</sequence>
<dbReference type="EMBL" id="CP000766">
    <property type="protein sequence ID" value="ABY72964.1"/>
    <property type="molecule type" value="Genomic_DNA"/>
</dbReference>
<dbReference type="RefSeq" id="WP_010977584.1">
    <property type="nucleotide sequence ID" value="NC_010263.3"/>
</dbReference>
<dbReference type="SMR" id="B0BUQ4"/>
<dbReference type="GeneID" id="928142"/>
<dbReference type="KEGG" id="rrj:RrIowa_1191"/>
<dbReference type="eggNOG" id="COG0092">
    <property type="taxonomic scope" value="Bacteria"/>
</dbReference>
<dbReference type="HOGENOM" id="CLU_058591_0_2_5"/>
<dbReference type="Proteomes" id="UP000000796">
    <property type="component" value="Chromosome"/>
</dbReference>
<dbReference type="GO" id="GO:0022627">
    <property type="term" value="C:cytosolic small ribosomal subunit"/>
    <property type="evidence" value="ECO:0007669"/>
    <property type="project" value="TreeGrafter"/>
</dbReference>
<dbReference type="GO" id="GO:0003729">
    <property type="term" value="F:mRNA binding"/>
    <property type="evidence" value="ECO:0007669"/>
    <property type="project" value="UniProtKB-UniRule"/>
</dbReference>
<dbReference type="GO" id="GO:0019843">
    <property type="term" value="F:rRNA binding"/>
    <property type="evidence" value="ECO:0007669"/>
    <property type="project" value="UniProtKB-UniRule"/>
</dbReference>
<dbReference type="GO" id="GO:0003735">
    <property type="term" value="F:structural constituent of ribosome"/>
    <property type="evidence" value="ECO:0007669"/>
    <property type="project" value="InterPro"/>
</dbReference>
<dbReference type="GO" id="GO:0006412">
    <property type="term" value="P:translation"/>
    <property type="evidence" value="ECO:0007669"/>
    <property type="project" value="UniProtKB-UniRule"/>
</dbReference>
<dbReference type="CDD" id="cd02412">
    <property type="entry name" value="KH-II_30S_S3"/>
    <property type="match status" value="1"/>
</dbReference>
<dbReference type="FunFam" id="3.30.300.20:FF:000001">
    <property type="entry name" value="30S ribosomal protein S3"/>
    <property type="match status" value="1"/>
</dbReference>
<dbReference type="Gene3D" id="3.30.300.20">
    <property type="match status" value="1"/>
</dbReference>
<dbReference type="Gene3D" id="3.30.1140.32">
    <property type="entry name" value="Ribosomal protein S3, C-terminal domain"/>
    <property type="match status" value="1"/>
</dbReference>
<dbReference type="HAMAP" id="MF_01309_B">
    <property type="entry name" value="Ribosomal_uS3_B"/>
    <property type="match status" value="1"/>
</dbReference>
<dbReference type="InterPro" id="IPR004087">
    <property type="entry name" value="KH_dom"/>
</dbReference>
<dbReference type="InterPro" id="IPR015946">
    <property type="entry name" value="KH_dom-like_a/b"/>
</dbReference>
<dbReference type="InterPro" id="IPR004044">
    <property type="entry name" value="KH_dom_type_2"/>
</dbReference>
<dbReference type="InterPro" id="IPR009019">
    <property type="entry name" value="KH_sf_prok-type"/>
</dbReference>
<dbReference type="InterPro" id="IPR036419">
    <property type="entry name" value="Ribosomal_S3_C_sf"/>
</dbReference>
<dbReference type="InterPro" id="IPR005704">
    <property type="entry name" value="Ribosomal_uS3_bac-typ"/>
</dbReference>
<dbReference type="InterPro" id="IPR001351">
    <property type="entry name" value="Ribosomal_uS3_C"/>
</dbReference>
<dbReference type="InterPro" id="IPR018280">
    <property type="entry name" value="Ribosomal_uS3_CS"/>
</dbReference>
<dbReference type="NCBIfam" id="TIGR01009">
    <property type="entry name" value="rpsC_bact"/>
    <property type="match status" value="1"/>
</dbReference>
<dbReference type="PANTHER" id="PTHR11760">
    <property type="entry name" value="30S/40S RIBOSOMAL PROTEIN S3"/>
    <property type="match status" value="1"/>
</dbReference>
<dbReference type="PANTHER" id="PTHR11760:SF19">
    <property type="entry name" value="SMALL RIBOSOMAL SUBUNIT PROTEIN US3C"/>
    <property type="match status" value="1"/>
</dbReference>
<dbReference type="Pfam" id="PF07650">
    <property type="entry name" value="KH_2"/>
    <property type="match status" value="1"/>
</dbReference>
<dbReference type="Pfam" id="PF00189">
    <property type="entry name" value="Ribosomal_S3_C"/>
    <property type="match status" value="1"/>
</dbReference>
<dbReference type="SMART" id="SM00322">
    <property type="entry name" value="KH"/>
    <property type="match status" value="1"/>
</dbReference>
<dbReference type="SUPFAM" id="SSF54814">
    <property type="entry name" value="Prokaryotic type KH domain (KH-domain type II)"/>
    <property type="match status" value="1"/>
</dbReference>
<dbReference type="SUPFAM" id="SSF54821">
    <property type="entry name" value="Ribosomal protein S3 C-terminal domain"/>
    <property type="match status" value="1"/>
</dbReference>
<dbReference type="PROSITE" id="PS50823">
    <property type="entry name" value="KH_TYPE_2"/>
    <property type="match status" value="1"/>
</dbReference>
<dbReference type="PROSITE" id="PS00548">
    <property type="entry name" value="RIBOSOMAL_S3"/>
    <property type="match status" value="1"/>
</dbReference>
<proteinExistence type="inferred from homology"/>
<gene>
    <name evidence="1" type="primary">rpsC</name>
    <name type="ordered locus">RrIowa_1191</name>
</gene>
<reference key="1">
    <citation type="journal article" date="2008" name="Infect. Immun.">
        <title>Genomic comparison of virulent Rickettsia rickettsii Sheila Smith and avirulent Rickettsia rickettsii Iowa.</title>
        <authorList>
            <person name="Ellison D.W."/>
            <person name="Clark T.R."/>
            <person name="Sturdevant D.E."/>
            <person name="Virtaneva K."/>
            <person name="Porcella S.F."/>
            <person name="Hackstadt T."/>
        </authorList>
    </citation>
    <scope>NUCLEOTIDE SEQUENCE [LARGE SCALE GENOMIC DNA]</scope>
    <source>
        <strain>Iowa</strain>
    </source>
</reference>
<comment type="function">
    <text evidence="1">Binds the lower part of the 30S subunit head. Binds mRNA in the 70S ribosome, positioning it for translation.</text>
</comment>
<comment type="subunit">
    <text evidence="1">Part of the 30S ribosomal subunit. Forms a tight complex with proteins S10 and S14.</text>
</comment>
<comment type="similarity">
    <text evidence="1">Belongs to the universal ribosomal protein uS3 family.</text>
</comment>
<feature type="chain" id="PRO_1000086150" description="Small ribosomal subunit protein uS3">
    <location>
        <begin position="1"/>
        <end position="217"/>
    </location>
</feature>
<feature type="domain" description="KH type-2" evidence="1">
    <location>
        <begin position="40"/>
        <end position="110"/>
    </location>
</feature>
<evidence type="ECO:0000255" key="1">
    <source>
        <dbReference type="HAMAP-Rule" id="MF_01309"/>
    </source>
</evidence>
<evidence type="ECO:0000305" key="2"/>
<accession>B0BUQ4</accession>
<protein>
    <recommendedName>
        <fullName evidence="1">Small ribosomal subunit protein uS3</fullName>
    </recommendedName>
    <alternativeName>
        <fullName evidence="2">30S ribosomal protein S3</fullName>
    </alternativeName>
</protein>
<organism>
    <name type="scientific">Rickettsia rickettsii (strain Iowa)</name>
    <dbReference type="NCBI Taxonomy" id="452659"/>
    <lineage>
        <taxon>Bacteria</taxon>
        <taxon>Pseudomonadati</taxon>
        <taxon>Pseudomonadota</taxon>
        <taxon>Alphaproteobacteria</taxon>
        <taxon>Rickettsiales</taxon>
        <taxon>Rickettsiaceae</taxon>
        <taxon>Rickettsieae</taxon>
        <taxon>Rickettsia</taxon>
        <taxon>spotted fever group</taxon>
    </lineage>
</organism>
<keyword id="KW-0687">Ribonucleoprotein</keyword>
<keyword id="KW-0689">Ribosomal protein</keyword>
<keyword id="KW-0694">RNA-binding</keyword>
<keyword id="KW-0699">rRNA-binding</keyword>